<proteinExistence type="inferred from homology"/>
<name>SURE_ACIAD</name>
<feature type="chain" id="PRO_0000235587" description="5'-nucleotidase SurE">
    <location>
        <begin position="1"/>
        <end position="255"/>
    </location>
</feature>
<feature type="binding site" evidence="1">
    <location>
        <position position="8"/>
    </location>
    <ligand>
        <name>a divalent metal cation</name>
        <dbReference type="ChEBI" id="CHEBI:60240"/>
    </ligand>
</feature>
<feature type="binding site" evidence="1">
    <location>
        <position position="9"/>
    </location>
    <ligand>
        <name>a divalent metal cation</name>
        <dbReference type="ChEBI" id="CHEBI:60240"/>
    </ligand>
</feature>
<feature type="binding site" evidence="1">
    <location>
        <position position="39"/>
    </location>
    <ligand>
        <name>a divalent metal cation</name>
        <dbReference type="ChEBI" id="CHEBI:60240"/>
    </ligand>
</feature>
<feature type="binding site" evidence="1">
    <location>
        <position position="91"/>
    </location>
    <ligand>
        <name>a divalent metal cation</name>
        <dbReference type="ChEBI" id="CHEBI:60240"/>
    </ligand>
</feature>
<sequence>MNILIANDDGVFAPGIQALAHALKPLGRVVIVAPESERSGYSSALTLDRPLRPIQISEDVWAVNGTPADCVYLSMNGLFDFEFDLVVSGINSGANLGDDVLYSGTVGAAFEGRLMKQPAIAVSLAGSNVRSYEHAHDYAVAAKWVHDFIQKGLPNLPPRHILNINIPDVAALKGERVTYQGLRAQSKPITSHVDPRGRQVYWIGLAGEAVTDPKKTSSHIQSDFFAVANGYVSITPIQMDATNYDILEDLQTYIG</sequence>
<evidence type="ECO:0000255" key="1">
    <source>
        <dbReference type="HAMAP-Rule" id="MF_00060"/>
    </source>
</evidence>
<comment type="function">
    <text evidence="1">Nucleotidase that shows phosphatase activity on nucleoside 5'-monophosphates.</text>
</comment>
<comment type="catalytic activity">
    <reaction evidence="1">
        <text>a ribonucleoside 5'-phosphate + H2O = a ribonucleoside + phosphate</text>
        <dbReference type="Rhea" id="RHEA:12484"/>
        <dbReference type="ChEBI" id="CHEBI:15377"/>
        <dbReference type="ChEBI" id="CHEBI:18254"/>
        <dbReference type="ChEBI" id="CHEBI:43474"/>
        <dbReference type="ChEBI" id="CHEBI:58043"/>
        <dbReference type="EC" id="3.1.3.5"/>
    </reaction>
</comment>
<comment type="cofactor">
    <cofactor evidence="1">
        <name>a divalent metal cation</name>
        <dbReference type="ChEBI" id="CHEBI:60240"/>
    </cofactor>
    <text evidence="1">Binds 1 divalent metal cation per subunit.</text>
</comment>
<comment type="subcellular location">
    <subcellularLocation>
        <location evidence="1">Cytoplasm</location>
    </subcellularLocation>
</comment>
<comment type="similarity">
    <text evidence="1">Belongs to the SurE nucleotidase family.</text>
</comment>
<organism>
    <name type="scientific">Acinetobacter baylyi (strain ATCC 33305 / BD413 / ADP1)</name>
    <dbReference type="NCBI Taxonomy" id="62977"/>
    <lineage>
        <taxon>Bacteria</taxon>
        <taxon>Pseudomonadati</taxon>
        <taxon>Pseudomonadota</taxon>
        <taxon>Gammaproteobacteria</taxon>
        <taxon>Moraxellales</taxon>
        <taxon>Moraxellaceae</taxon>
        <taxon>Acinetobacter</taxon>
    </lineage>
</organism>
<keyword id="KW-0963">Cytoplasm</keyword>
<keyword id="KW-0378">Hydrolase</keyword>
<keyword id="KW-0479">Metal-binding</keyword>
<keyword id="KW-0547">Nucleotide-binding</keyword>
<reference key="1">
    <citation type="journal article" date="2004" name="Nucleic Acids Res.">
        <title>Unique features revealed by the genome sequence of Acinetobacter sp. ADP1, a versatile and naturally transformation competent bacterium.</title>
        <authorList>
            <person name="Barbe V."/>
            <person name="Vallenet D."/>
            <person name="Fonknechten N."/>
            <person name="Kreimeyer A."/>
            <person name="Oztas S."/>
            <person name="Labarre L."/>
            <person name="Cruveiller S."/>
            <person name="Robert C."/>
            <person name="Duprat S."/>
            <person name="Wincker P."/>
            <person name="Ornston L.N."/>
            <person name="Weissenbach J."/>
            <person name="Marliere P."/>
            <person name="Cohen G.N."/>
            <person name="Medigue C."/>
        </authorList>
    </citation>
    <scope>NUCLEOTIDE SEQUENCE [LARGE SCALE GENOMIC DNA]</scope>
    <source>
        <strain>ATCC 33305 / BD413 / ADP1</strain>
    </source>
</reference>
<gene>
    <name evidence="1" type="primary">surE</name>
    <name type="ordered locus">ACIAD1227</name>
</gene>
<dbReference type="EC" id="3.1.3.5" evidence="1"/>
<dbReference type="EMBL" id="CR543861">
    <property type="protein sequence ID" value="CAG68103.1"/>
    <property type="molecule type" value="Genomic_DNA"/>
</dbReference>
<dbReference type="RefSeq" id="WP_004926046.1">
    <property type="nucleotide sequence ID" value="NC_005966.1"/>
</dbReference>
<dbReference type="SMR" id="Q6FCV6"/>
<dbReference type="STRING" id="202950.GCA_001485005_00996"/>
<dbReference type="GeneID" id="45233654"/>
<dbReference type="KEGG" id="aci:ACIAD1227"/>
<dbReference type="eggNOG" id="COG0496">
    <property type="taxonomic scope" value="Bacteria"/>
</dbReference>
<dbReference type="HOGENOM" id="CLU_045192_1_2_6"/>
<dbReference type="OrthoDB" id="9780815at2"/>
<dbReference type="BioCyc" id="ASP62977:ACIAD_RS05650-MONOMER"/>
<dbReference type="Proteomes" id="UP000000430">
    <property type="component" value="Chromosome"/>
</dbReference>
<dbReference type="GO" id="GO:0005737">
    <property type="term" value="C:cytoplasm"/>
    <property type="evidence" value="ECO:0007669"/>
    <property type="project" value="UniProtKB-SubCell"/>
</dbReference>
<dbReference type="GO" id="GO:0008254">
    <property type="term" value="F:3'-nucleotidase activity"/>
    <property type="evidence" value="ECO:0007669"/>
    <property type="project" value="TreeGrafter"/>
</dbReference>
<dbReference type="GO" id="GO:0008253">
    <property type="term" value="F:5'-nucleotidase activity"/>
    <property type="evidence" value="ECO:0007669"/>
    <property type="project" value="UniProtKB-UniRule"/>
</dbReference>
<dbReference type="GO" id="GO:0004309">
    <property type="term" value="F:exopolyphosphatase activity"/>
    <property type="evidence" value="ECO:0007669"/>
    <property type="project" value="TreeGrafter"/>
</dbReference>
<dbReference type="GO" id="GO:0046872">
    <property type="term" value="F:metal ion binding"/>
    <property type="evidence" value="ECO:0007669"/>
    <property type="project" value="UniProtKB-UniRule"/>
</dbReference>
<dbReference type="GO" id="GO:0000166">
    <property type="term" value="F:nucleotide binding"/>
    <property type="evidence" value="ECO:0007669"/>
    <property type="project" value="UniProtKB-KW"/>
</dbReference>
<dbReference type="FunFam" id="3.40.1210.10:FF:000001">
    <property type="entry name" value="5'/3'-nucleotidase SurE"/>
    <property type="match status" value="1"/>
</dbReference>
<dbReference type="Gene3D" id="3.40.1210.10">
    <property type="entry name" value="Survival protein SurE-like phosphatase/nucleotidase"/>
    <property type="match status" value="1"/>
</dbReference>
<dbReference type="HAMAP" id="MF_00060">
    <property type="entry name" value="SurE"/>
    <property type="match status" value="1"/>
</dbReference>
<dbReference type="InterPro" id="IPR030048">
    <property type="entry name" value="SurE"/>
</dbReference>
<dbReference type="InterPro" id="IPR002828">
    <property type="entry name" value="SurE-like_Pase/nucleotidase"/>
</dbReference>
<dbReference type="InterPro" id="IPR036523">
    <property type="entry name" value="SurE-like_sf"/>
</dbReference>
<dbReference type="NCBIfam" id="NF001490">
    <property type="entry name" value="PRK00346.1-4"/>
    <property type="match status" value="1"/>
</dbReference>
<dbReference type="NCBIfam" id="TIGR00087">
    <property type="entry name" value="surE"/>
    <property type="match status" value="1"/>
</dbReference>
<dbReference type="PANTHER" id="PTHR30457">
    <property type="entry name" value="5'-NUCLEOTIDASE SURE"/>
    <property type="match status" value="1"/>
</dbReference>
<dbReference type="PANTHER" id="PTHR30457:SF12">
    <property type="entry name" value="5'_3'-NUCLEOTIDASE SURE"/>
    <property type="match status" value="1"/>
</dbReference>
<dbReference type="Pfam" id="PF01975">
    <property type="entry name" value="SurE"/>
    <property type="match status" value="1"/>
</dbReference>
<dbReference type="SUPFAM" id="SSF64167">
    <property type="entry name" value="SurE-like"/>
    <property type="match status" value="1"/>
</dbReference>
<protein>
    <recommendedName>
        <fullName evidence="1">5'-nucleotidase SurE</fullName>
        <ecNumber evidence="1">3.1.3.5</ecNumber>
    </recommendedName>
    <alternativeName>
        <fullName evidence="1">Nucleoside 5'-monophosphate phosphohydrolase</fullName>
    </alternativeName>
</protein>
<accession>Q6FCV6</accession>